<dbReference type="EMBL" id="AK009824">
    <property type="protein sequence ID" value="BAB26524.1"/>
    <property type="molecule type" value="mRNA"/>
</dbReference>
<dbReference type="EMBL" id="AK009487">
    <property type="protein sequence ID" value="BAB26319.1"/>
    <property type="molecule type" value="mRNA"/>
</dbReference>
<dbReference type="EMBL" id="BC003455">
    <property type="protein sequence ID" value="AAH03455.1"/>
    <property type="molecule type" value="mRNA"/>
</dbReference>
<dbReference type="EMBL" id="BC019631">
    <property type="protein sequence ID" value="AAH19631.1"/>
    <property type="molecule type" value="mRNA"/>
</dbReference>
<dbReference type="CCDS" id="CCDS24958.1"/>
<dbReference type="RefSeq" id="NP_077173.1">
    <property type="nucleotide sequence ID" value="NM_024211.3"/>
</dbReference>
<dbReference type="SMR" id="Q9CR62"/>
<dbReference type="BioGRID" id="212490">
    <property type="interactions" value="35"/>
</dbReference>
<dbReference type="FunCoup" id="Q9CR62">
    <property type="interactions" value="2150"/>
</dbReference>
<dbReference type="IntAct" id="Q9CR62">
    <property type="interactions" value="12"/>
</dbReference>
<dbReference type="MINT" id="Q9CR62"/>
<dbReference type="STRING" id="10090.ENSMUSP00000014750"/>
<dbReference type="TCDB" id="2.A.29.2.11">
    <property type="family name" value="the mitochondrial carrier (mc) family"/>
</dbReference>
<dbReference type="CarbonylDB" id="Q9CR62"/>
<dbReference type="GlyGen" id="Q9CR62">
    <property type="glycosylation" value="1 site, 1 O-linked glycan (1 site)"/>
</dbReference>
<dbReference type="iPTMnet" id="Q9CR62"/>
<dbReference type="MetOSite" id="Q9CR62"/>
<dbReference type="PhosphoSitePlus" id="Q9CR62"/>
<dbReference type="SwissPalm" id="Q9CR62"/>
<dbReference type="jPOST" id="Q9CR62"/>
<dbReference type="PaxDb" id="10090-ENSMUSP00000014750"/>
<dbReference type="ProteomicsDB" id="295745"/>
<dbReference type="Pumba" id="Q9CR62"/>
<dbReference type="Antibodypedia" id="11377">
    <property type="antibodies" value="216 antibodies from 29 providers"/>
</dbReference>
<dbReference type="DNASU" id="67863"/>
<dbReference type="Ensembl" id="ENSMUST00000014750.15">
    <property type="protein sequence ID" value="ENSMUSP00000014750.9"/>
    <property type="gene ID" value="ENSMUSG00000014606.15"/>
</dbReference>
<dbReference type="GeneID" id="67863"/>
<dbReference type="KEGG" id="mmu:67863"/>
<dbReference type="UCSC" id="uc007jvr.2">
    <property type="organism name" value="mouse"/>
</dbReference>
<dbReference type="AGR" id="MGI:1915113"/>
<dbReference type="CTD" id="8402"/>
<dbReference type="MGI" id="MGI:1915113">
    <property type="gene designation" value="Slc25a11"/>
</dbReference>
<dbReference type="VEuPathDB" id="HostDB:ENSMUSG00000014606"/>
<dbReference type="eggNOG" id="KOG0759">
    <property type="taxonomic scope" value="Eukaryota"/>
</dbReference>
<dbReference type="GeneTree" id="ENSGT00940000158465"/>
<dbReference type="HOGENOM" id="CLU_015166_14_1_1"/>
<dbReference type="InParanoid" id="Q9CR62"/>
<dbReference type="OMA" id="TLWRGAI"/>
<dbReference type="OrthoDB" id="448427at2759"/>
<dbReference type="PhylomeDB" id="Q9CR62"/>
<dbReference type="TreeFam" id="TF354262"/>
<dbReference type="Reactome" id="R-MMU-428643">
    <property type="pathway name" value="Organic anion transporters"/>
</dbReference>
<dbReference type="Reactome" id="R-MMU-9856872">
    <property type="pathway name" value="Malate-aspartate shuttle"/>
</dbReference>
<dbReference type="BioGRID-ORCS" id="67863">
    <property type="hits" value="0 hits in 76 CRISPR screens"/>
</dbReference>
<dbReference type="CD-CODE" id="CE726F99">
    <property type="entry name" value="Postsynaptic density"/>
</dbReference>
<dbReference type="ChiTaRS" id="Slc25a11">
    <property type="organism name" value="mouse"/>
</dbReference>
<dbReference type="PRO" id="PR:Q9CR62"/>
<dbReference type="Proteomes" id="UP000000589">
    <property type="component" value="Chromosome 11"/>
</dbReference>
<dbReference type="RNAct" id="Q9CR62">
    <property type="molecule type" value="protein"/>
</dbReference>
<dbReference type="Bgee" id="ENSMUSG00000014606">
    <property type="expression patterns" value="Expressed in extra-ocular muscle and 258 other cell types or tissues"/>
</dbReference>
<dbReference type="ExpressionAtlas" id="Q9CR62">
    <property type="expression patterns" value="baseline and differential"/>
</dbReference>
<dbReference type="GO" id="GO:0005743">
    <property type="term" value="C:mitochondrial inner membrane"/>
    <property type="evidence" value="ECO:0000315"/>
    <property type="project" value="MGI"/>
</dbReference>
<dbReference type="GO" id="GO:0005739">
    <property type="term" value="C:mitochondrion"/>
    <property type="evidence" value="ECO:0007005"/>
    <property type="project" value="MGI"/>
</dbReference>
<dbReference type="GO" id="GO:0015367">
    <property type="term" value="F:oxoglutarate:malate antiporter activity"/>
    <property type="evidence" value="ECO:0000315"/>
    <property type="project" value="MGI"/>
</dbReference>
<dbReference type="GO" id="GO:0006094">
    <property type="term" value="P:gluconeogenesis"/>
    <property type="evidence" value="ECO:0000315"/>
    <property type="project" value="MGI"/>
</dbReference>
<dbReference type="GO" id="GO:0006869">
    <property type="term" value="P:lipid transport"/>
    <property type="evidence" value="ECO:0007669"/>
    <property type="project" value="UniProtKB-KW"/>
</dbReference>
<dbReference type="GO" id="GO:0043490">
    <property type="term" value="P:malate-aspartate shuttle"/>
    <property type="evidence" value="ECO:0000315"/>
    <property type="project" value="MGI"/>
</dbReference>
<dbReference type="FunFam" id="1.50.40.10:FF:000013">
    <property type="entry name" value="Mitochondrial 2-oxoglutarate/malate carrier protein-like protein"/>
    <property type="match status" value="1"/>
</dbReference>
<dbReference type="Gene3D" id="1.50.40.10">
    <property type="entry name" value="Mitochondrial carrier domain"/>
    <property type="match status" value="1"/>
</dbReference>
<dbReference type="InterPro" id="IPR050391">
    <property type="entry name" value="Mito_Metabolite_Transporter"/>
</dbReference>
<dbReference type="InterPro" id="IPR018108">
    <property type="entry name" value="Mitochondrial_sb/sol_carrier"/>
</dbReference>
<dbReference type="InterPro" id="IPR023395">
    <property type="entry name" value="Mt_carrier_dom_sf"/>
</dbReference>
<dbReference type="PANTHER" id="PTHR45618">
    <property type="entry name" value="MITOCHONDRIAL DICARBOXYLATE CARRIER-RELATED"/>
    <property type="match status" value="1"/>
</dbReference>
<dbReference type="Pfam" id="PF00153">
    <property type="entry name" value="Mito_carr"/>
    <property type="match status" value="3"/>
</dbReference>
<dbReference type="SUPFAM" id="SSF103506">
    <property type="entry name" value="Mitochondrial carrier"/>
    <property type="match status" value="1"/>
</dbReference>
<dbReference type="PROSITE" id="PS50920">
    <property type="entry name" value="SOLCAR"/>
    <property type="match status" value="3"/>
</dbReference>
<name>M2OM_MOUSE</name>
<gene>
    <name type="primary">Slc25a11</name>
</gene>
<proteinExistence type="evidence at protein level"/>
<sequence length="314" mass="34155">MAATASPGAGRMDGKPRTSPKSVKFLFGGLAGMGATVFVQPLDLVKNRMQLSGEGAKTREYKTSFHALTSILKTEGLKGIYTGLSAGLLRQATYTTTRLGIYTVLFERLTGADGTPPGFLLKALIGMTAGATGAFVGTPAEVALIRMTADGRLPADQRRGYKNVFNALVRIAREEGVPTLWRGCIPTMARAVVVNAAQLASYSQSKQFLLDSGYFSDNILCHFCASMISGLVTTAASMPVDIVKTRIQNMRMIDGKPEYKNGLDVLLKVVRYEGFFSLWKGFTPYYARLGPHTVLTFIFLEQMNKAYKRLFLSG</sequence>
<reference key="1">
    <citation type="journal article" date="2005" name="Science">
        <title>The transcriptional landscape of the mammalian genome.</title>
        <authorList>
            <person name="Carninci P."/>
            <person name="Kasukawa T."/>
            <person name="Katayama S."/>
            <person name="Gough J."/>
            <person name="Frith M.C."/>
            <person name="Maeda N."/>
            <person name="Oyama R."/>
            <person name="Ravasi T."/>
            <person name="Lenhard B."/>
            <person name="Wells C."/>
            <person name="Kodzius R."/>
            <person name="Shimokawa K."/>
            <person name="Bajic V.B."/>
            <person name="Brenner S.E."/>
            <person name="Batalov S."/>
            <person name="Forrest A.R."/>
            <person name="Zavolan M."/>
            <person name="Davis M.J."/>
            <person name="Wilming L.G."/>
            <person name="Aidinis V."/>
            <person name="Allen J.E."/>
            <person name="Ambesi-Impiombato A."/>
            <person name="Apweiler R."/>
            <person name="Aturaliya R.N."/>
            <person name="Bailey T.L."/>
            <person name="Bansal M."/>
            <person name="Baxter L."/>
            <person name="Beisel K.W."/>
            <person name="Bersano T."/>
            <person name="Bono H."/>
            <person name="Chalk A.M."/>
            <person name="Chiu K.P."/>
            <person name="Choudhary V."/>
            <person name="Christoffels A."/>
            <person name="Clutterbuck D.R."/>
            <person name="Crowe M.L."/>
            <person name="Dalla E."/>
            <person name="Dalrymple B.P."/>
            <person name="de Bono B."/>
            <person name="Della Gatta G."/>
            <person name="di Bernardo D."/>
            <person name="Down T."/>
            <person name="Engstrom P."/>
            <person name="Fagiolini M."/>
            <person name="Faulkner G."/>
            <person name="Fletcher C.F."/>
            <person name="Fukushima T."/>
            <person name="Furuno M."/>
            <person name="Futaki S."/>
            <person name="Gariboldi M."/>
            <person name="Georgii-Hemming P."/>
            <person name="Gingeras T.R."/>
            <person name="Gojobori T."/>
            <person name="Green R.E."/>
            <person name="Gustincich S."/>
            <person name="Harbers M."/>
            <person name="Hayashi Y."/>
            <person name="Hensch T.K."/>
            <person name="Hirokawa N."/>
            <person name="Hill D."/>
            <person name="Huminiecki L."/>
            <person name="Iacono M."/>
            <person name="Ikeo K."/>
            <person name="Iwama A."/>
            <person name="Ishikawa T."/>
            <person name="Jakt M."/>
            <person name="Kanapin A."/>
            <person name="Katoh M."/>
            <person name="Kawasawa Y."/>
            <person name="Kelso J."/>
            <person name="Kitamura H."/>
            <person name="Kitano H."/>
            <person name="Kollias G."/>
            <person name="Krishnan S.P."/>
            <person name="Kruger A."/>
            <person name="Kummerfeld S.K."/>
            <person name="Kurochkin I.V."/>
            <person name="Lareau L.F."/>
            <person name="Lazarevic D."/>
            <person name="Lipovich L."/>
            <person name="Liu J."/>
            <person name="Liuni S."/>
            <person name="McWilliam S."/>
            <person name="Madan Babu M."/>
            <person name="Madera M."/>
            <person name="Marchionni L."/>
            <person name="Matsuda H."/>
            <person name="Matsuzawa S."/>
            <person name="Miki H."/>
            <person name="Mignone F."/>
            <person name="Miyake S."/>
            <person name="Morris K."/>
            <person name="Mottagui-Tabar S."/>
            <person name="Mulder N."/>
            <person name="Nakano N."/>
            <person name="Nakauchi H."/>
            <person name="Ng P."/>
            <person name="Nilsson R."/>
            <person name="Nishiguchi S."/>
            <person name="Nishikawa S."/>
            <person name="Nori F."/>
            <person name="Ohara O."/>
            <person name="Okazaki Y."/>
            <person name="Orlando V."/>
            <person name="Pang K.C."/>
            <person name="Pavan W.J."/>
            <person name="Pavesi G."/>
            <person name="Pesole G."/>
            <person name="Petrovsky N."/>
            <person name="Piazza S."/>
            <person name="Reed J."/>
            <person name="Reid J.F."/>
            <person name="Ring B.Z."/>
            <person name="Ringwald M."/>
            <person name="Rost B."/>
            <person name="Ruan Y."/>
            <person name="Salzberg S.L."/>
            <person name="Sandelin A."/>
            <person name="Schneider C."/>
            <person name="Schoenbach C."/>
            <person name="Sekiguchi K."/>
            <person name="Semple C.A."/>
            <person name="Seno S."/>
            <person name="Sessa L."/>
            <person name="Sheng Y."/>
            <person name="Shibata Y."/>
            <person name="Shimada H."/>
            <person name="Shimada K."/>
            <person name="Silva D."/>
            <person name="Sinclair B."/>
            <person name="Sperling S."/>
            <person name="Stupka E."/>
            <person name="Sugiura K."/>
            <person name="Sultana R."/>
            <person name="Takenaka Y."/>
            <person name="Taki K."/>
            <person name="Tammoja K."/>
            <person name="Tan S.L."/>
            <person name="Tang S."/>
            <person name="Taylor M.S."/>
            <person name="Tegner J."/>
            <person name="Teichmann S.A."/>
            <person name="Ueda H.R."/>
            <person name="van Nimwegen E."/>
            <person name="Verardo R."/>
            <person name="Wei C.L."/>
            <person name="Yagi K."/>
            <person name="Yamanishi H."/>
            <person name="Zabarovsky E."/>
            <person name="Zhu S."/>
            <person name="Zimmer A."/>
            <person name="Hide W."/>
            <person name="Bult C."/>
            <person name="Grimmond S.M."/>
            <person name="Teasdale R.D."/>
            <person name="Liu E.T."/>
            <person name="Brusic V."/>
            <person name="Quackenbush J."/>
            <person name="Wahlestedt C."/>
            <person name="Mattick J.S."/>
            <person name="Hume D.A."/>
            <person name="Kai C."/>
            <person name="Sasaki D."/>
            <person name="Tomaru Y."/>
            <person name="Fukuda S."/>
            <person name="Kanamori-Katayama M."/>
            <person name="Suzuki M."/>
            <person name="Aoki J."/>
            <person name="Arakawa T."/>
            <person name="Iida J."/>
            <person name="Imamura K."/>
            <person name="Itoh M."/>
            <person name="Kato T."/>
            <person name="Kawaji H."/>
            <person name="Kawagashira N."/>
            <person name="Kawashima T."/>
            <person name="Kojima M."/>
            <person name="Kondo S."/>
            <person name="Konno H."/>
            <person name="Nakano K."/>
            <person name="Ninomiya N."/>
            <person name="Nishio T."/>
            <person name="Okada M."/>
            <person name="Plessy C."/>
            <person name="Shibata K."/>
            <person name="Shiraki T."/>
            <person name="Suzuki S."/>
            <person name="Tagami M."/>
            <person name="Waki K."/>
            <person name="Watahiki A."/>
            <person name="Okamura-Oho Y."/>
            <person name="Suzuki H."/>
            <person name="Kawai J."/>
            <person name="Hayashizaki Y."/>
        </authorList>
    </citation>
    <scope>NUCLEOTIDE SEQUENCE [LARGE SCALE MRNA]</scope>
    <source>
        <strain>C57BL/6J</strain>
        <tissue>Tongue</tissue>
    </source>
</reference>
<reference key="2">
    <citation type="journal article" date="2004" name="Genome Res.">
        <title>The status, quality, and expansion of the NIH full-length cDNA project: the Mammalian Gene Collection (MGC).</title>
        <authorList>
            <consortium name="The MGC Project Team"/>
        </authorList>
    </citation>
    <scope>NUCLEOTIDE SEQUENCE [LARGE SCALE MRNA]</scope>
    <source>
        <strain>C57BL/6J</strain>
        <tissue>Mammary gland</tissue>
    </source>
</reference>
<reference key="3">
    <citation type="submission" date="2007-04" db="UniProtKB">
        <authorList>
            <person name="Lubec G."/>
            <person name="Kang S.U."/>
        </authorList>
    </citation>
    <scope>PROTEIN SEQUENCE OF 79-90; 99-146; 163-170; 174-182; 191-206 AND 289-205</scope>
    <scope>IDENTIFICATION BY MASS SPECTROMETRY</scope>
    <source>
        <strain>C57BL/6J</strain>
        <tissue>Brain</tissue>
    </source>
</reference>
<reference key="4">
    <citation type="journal article" date="2008" name="J. Proteome Res.">
        <title>Large-scale identification and evolution indexing of tyrosine phosphorylation sites from murine brain.</title>
        <authorList>
            <person name="Ballif B.A."/>
            <person name="Carey G.R."/>
            <person name="Sunyaev S.R."/>
            <person name="Gygi S.P."/>
        </authorList>
    </citation>
    <scope>PHOSPHORYLATION [LARGE SCALE ANALYSIS] AT TYR-102</scope>
    <scope>IDENTIFICATION BY MASS SPECTROMETRY [LARGE SCALE ANALYSIS]</scope>
    <source>
        <tissue>Brain</tissue>
    </source>
</reference>
<reference key="5">
    <citation type="journal article" date="2010" name="Cell">
        <title>A tissue-specific atlas of mouse protein phosphorylation and expression.</title>
        <authorList>
            <person name="Huttlin E.L."/>
            <person name="Jedrychowski M.P."/>
            <person name="Elias J.E."/>
            <person name="Goswami T."/>
            <person name="Rad R."/>
            <person name="Beausoleil S.A."/>
            <person name="Villen J."/>
            <person name="Haas W."/>
            <person name="Sowa M.E."/>
            <person name="Gygi S.P."/>
        </authorList>
    </citation>
    <scope>IDENTIFICATION BY MASS SPECTROMETRY [LARGE SCALE ANALYSIS]</scope>
    <source>
        <tissue>Brain</tissue>
        <tissue>Brown adipose tissue</tissue>
        <tissue>Heart</tissue>
        <tissue>Kidney</tissue>
        <tissue>Liver</tissue>
        <tissue>Lung</tissue>
        <tissue>Pancreas</tissue>
        <tissue>Spleen</tissue>
        <tissue>Testis</tissue>
    </source>
</reference>
<reference key="6">
    <citation type="journal article" date="2011" name="PLoS ONE">
        <title>MISC-1/OGC links mitochondrial metabolism, apoptosis and insulin secretion.</title>
        <authorList>
            <person name="Gallo M."/>
            <person name="Park D."/>
            <person name="Luciani D.S."/>
            <person name="Kida K."/>
            <person name="Palmieri F."/>
            <person name="Blacque O.E."/>
            <person name="Johnson J.D."/>
            <person name="Riddle D.L."/>
        </authorList>
    </citation>
    <scope>FUNCTION</scope>
</reference>
<reference key="7">
    <citation type="journal article" date="2013" name="Mol. Cell">
        <title>SIRT5-mediated lysine desuccinylation impacts diverse metabolic pathways.</title>
        <authorList>
            <person name="Park J."/>
            <person name="Chen Y."/>
            <person name="Tishkoff D.X."/>
            <person name="Peng C."/>
            <person name="Tan M."/>
            <person name="Dai L."/>
            <person name="Xie Z."/>
            <person name="Zhang Y."/>
            <person name="Zwaans B.M."/>
            <person name="Skinner M.E."/>
            <person name="Lombard D.B."/>
            <person name="Zhao Y."/>
        </authorList>
    </citation>
    <scope>SUCCINYLATION [LARGE SCALE ANALYSIS] AT LYS-57</scope>
    <scope>IDENTIFICATION BY MASS SPECTROMETRY [LARGE SCALE ANALYSIS]</scope>
    <source>
        <tissue>Liver</tissue>
    </source>
</reference>
<reference key="8">
    <citation type="journal article" date="2013" name="Proc. Natl. Acad. Sci. U.S.A.">
        <title>Label-free quantitative proteomics of the lysine acetylome in mitochondria identifies substrates of SIRT3 in metabolic pathways.</title>
        <authorList>
            <person name="Rardin M.J."/>
            <person name="Newman J.C."/>
            <person name="Held J.M."/>
            <person name="Cusack M.P."/>
            <person name="Sorensen D.J."/>
            <person name="Li B."/>
            <person name="Schilling B."/>
            <person name="Mooney S.D."/>
            <person name="Kahn C.R."/>
            <person name="Verdin E."/>
            <person name="Gibson B.W."/>
        </authorList>
    </citation>
    <scope>ACETYLATION [LARGE SCALE ANALYSIS] AT LYS-256</scope>
    <scope>IDENTIFICATION BY MASS SPECTROMETRY [LARGE SCALE ANALYSIS]</scope>
    <source>
        <tissue>Liver</tissue>
    </source>
</reference>
<feature type="initiator methionine" description="Removed" evidence="3">
    <location>
        <position position="1"/>
    </location>
</feature>
<feature type="chain" id="PRO_0000090626" description="Mitochondrial 2-oxoglutarate/malate carrier protein">
    <location>
        <begin position="2"/>
        <end position="314"/>
    </location>
</feature>
<feature type="transmembrane region" description="Helical; Name=1" evidence="4">
    <location>
        <begin position="24"/>
        <end position="42"/>
    </location>
</feature>
<feature type="transmembrane region" description="Helical; Name=2" evidence="4">
    <location>
        <begin position="83"/>
        <end position="101"/>
    </location>
</feature>
<feature type="transmembrane region" description="Helical; Name=3" evidence="4">
    <location>
        <begin position="119"/>
        <end position="140"/>
    </location>
</feature>
<feature type="transmembrane region" description="Helical; Name=4" evidence="4">
    <location>
        <begin position="183"/>
        <end position="202"/>
    </location>
</feature>
<feature type="transmembrane region" description="Helical; Name=5" evidence="4">
    <location>
        <begin position="222"/>
        <end position="240"/>
    </location>
</feature>
<feature type="transmembrane region" description="Helical; Name=6" evidence="4">
    <location>
        <begin position="281"/>
        <end position="300"/>
    </location>
</feature>
<feature type="repeat" description="Solcar 1">
    <location>
        <begin position="23"/>
        <end position="108"/>
    </location>
</feature>
<feature type="repeat" description="Solcar 2">
    <location>
        <begin position="117"/>
        <end position="208"/>
    </location>
</feature>
<feature type="repeat" description="Solcar 3">
    <location>
        <begin position="217"/>
        <end position="306"/>
    </location>
</feature>
<feature type="modified residue" description="N-acetylalanine" evidence="3">
    <location>
        <position position="2"/>
    </location>
</feature>
<feature type="modified residue" description="Phosphoserine" evidence="3">
    <location>
        <position position="6"/>
    </location>
</feature>
<feature type="modified residue" description="N6-succinyllysine" evidence="10">
    <location>
        <position position="57"/>
    </location>
</feature>
<feature type="modified residue" description="N6-acetyllysine" evidence="3">
    <location>
        <position position="73"/>
    </location>
</feature>
<feature type="modified residue" description="Phosphotyrosine" evidence="8">
    <location>
        <position position="102"/>
    </location>
</feature>
<feature type="modified residue" description="N6-acetyllysine" evidence="9">
    <location>
        <position position="256"/>
    </location>
</feature>
<protein>
    <recommendedName>
        <fullName>Mitochondrial 2-oxoglutarate/malate carrier protein</fullName>
        <shortName evidence="6">OGCP</shortName>
        <shortName evidence="6">alpha-oxoglutarate carrier</shortName>
    </recommendedName>
    <alternativeName>
        <fullName>Solute carrier family 25 member 11</fullName>
        <shortName>SLC25A11</shortName>
    </alternativeName>
</protein>
<evidence type="ECO:0000250" key="1">
    <source>
        <dbReference type="UniProtKB" id="P22292"/>
    </source>
</evidence>
<evidence type="ECO:0000250" key="2">
    <source>
        <dbReference type="UniProtKB" id="P97700"/>
    </source>
</evidence>
<evidence type="ECO:0000250" key="3">
    <source>
        <dbReference type="UniProtKB" id="Q02978"/>
    </source>
</evidence>
<evidence type="ECO:0000255" key="4"/>
<evidence type="ECO:0000269" key="5">
    <source>
    </source>
</evidence>
<evidence type="ECO:0000303" key="6">
    <source>
    </source>
</evidence>
<evidence type="ECO:0000305" key="7"/>
<evidence type="ECO:0007744" key="8">
    <source>
    </source>
</evidence>
<evidence type="ECO:0007744" key="9">
    <source>
    </source>
</evidence>
<evidence type="ECO:0007744" key="10">
    <source>
    </source>
</evidence>
<keyword id="KW-0007">Acetylation</keyword>
<keyword id="KW-0050">Antiport</keyword>
<keyword id="KW-0903">Direct protein sequencing</keyword>
<keyword id="KW-0445">Lipid transport</keyword>
<keyword id="KW-0472">Membrane</keyword>
<keyword id="KW-0496">Mitochondrion</keyword>
<keyword id="KW-0999">Mitochondrion inner membrane</keyword>
<keyword id="KW-0597">Phosphoprotein</keyword>
<keyword id="KW-1185">Reference proteome</keyword>
<keyword id="KW-0677">Repeat</keyword>
<keyword id="KW-0812">Transmembrane</keyword>
<keyword id="KW-1133">Transmembrane helix</keyword>
<keyword id="KW-0813">Transport</keyword>
<comment type="function">
    <text evidence="1 2 3 5">Catalyzes the transport of 2-oxoglutarate (alpha-oxoglutarate) across the inner mitochondrial membrane in an electroneutral exchange for malate. Can also exchange 2-oxoglutarate for other dicarboxylic acids such as malonate, succinate, maleate and oxaloacetate, although with lower affinity. Contributes to several metabolic processes, including the malate-aspartate shuttle, the oxoglutarate/isocitrate shuttle, in gluconeogenesis from lactate, and in nitrogen metabolism (By similarity). Maintains mitochondrial fusion and fission events, and the organization and morphology of cristae (By similarity). Involved in the regulation of apoptosis (PubMed:21448454). Helps protect from cytotoxic-induced apoptosis by modulating glutathione levels in mitochondria (By similarity).</text>
</comment>
<comment type="catalytic activity">
    <reaction evidence="1">
        <text>(S)-malate(in) + 2-oxoglutarate(out) = (S)-malate(out) + 2-oxoglutarate(in)</text>
        <dbReference type="Rhea" id="RHEA:71587"/>
        <dbReference type="ChEBI" id="CHEBI:15589"/>
        <dbReference type="ChEBI" id="CHEBI:16810"/>
    </reaction>
</comment>
<comment type="catalytic activity">
    <reaction evidence="1">
        <text>malonate(in) + 2-oxoglutarate(out) = malonate(out) + 2-oxoglutarate(in)</text>
        <dbReference type="Rhea" id="RHEA:71591"/>
        <dbReference type="ChEBI" id="CHEBI:15792"/>
        <dbReference type="ChEBI" id="CHEBI:16810"/>
    </reaction>
</comment>
<comment type="catalytic activity">
    <reaction evidence="1">
        <text>succinate(in) + 2-oxoglutarate(out) = succinate(out) + 2-oxoglutarate(in)</text>
        <dbReference type="Rhea" id="RHEA:71595"/>
        <dbReference type="ChEBI" id="CHEBI:16810"/>
        <dbReference type="ChEBI" id="CHEBI:30031"/>
    </reaction>
</comment>
<comment type="catalytic activity">
    <reaction evidence="1">
        <text>maleate(in) + 2-oxoglutarate(out) = maleate(out) + 2-oxoglutarate(in)</text>
        <dbReference type="Rhea" id="RHEA:71599"/>
        <dbReference type="ChEBI" id="CHEBI:16810"/>
        <dbReference type="ChEBI" id="CHEBI:30780"/>
    </reaction>
</comment>
<comment type="catalytic activity">
    <reaction evidence="1">
        <text>oxaloacetate(in) + 2-oxoglutarate(out) = oxaloacetate(out) + 2-oxoglutarate(in)</text>
        <dbReference type="Rhea" id="RHEA:71603"/>
        <dbReference type="ChEBI" id="CHEBI:16452"/>
        <dbReference type="ChEBI" id="CHEBI:16810"/>
    </reaction>
</comment>
<comment type="subunit">
    <text evidence="3">Interacts with SMIM26.</text>
</comment>
<comment type="subcellular location">
    <subcellularLocation>
        <location evidence="2">Mitochondrion inner membrane</location>
        <topology evidence="2">Multi-pass membrane protein</topology>
    </subcellularLocation>
</comment>
<comment type="similarity">
    <text evidence="7">Belongs to the mitochondrial carrier (TC 2.A.29) family.</text>
</comment>
<accession>Q9CR62</accession>
<organism>
    <name type="scientific">Mus musculus</name>
    <name type="common">Mouse</name>
    <dbReference type="NCBI Taxonomy" id="10090"/>
    <lineage>
        <taxon>Eukaryota</taxon>
        <taxon>Metazoa</taxon>
        <taxon>Chordata</taxon>
        <taxon>Craniata</taxon>
        <taxon>Vertebrata</taxon>
        <taxon>Euteleostomi</taxon>
        <taxon>Mammalia</taxon>
        <taxon>Eutheria</taxon>
        <taxon>Euarchontoglires</taxon>
        <taxon>Glires</taxon>
        <taxon>Rodentia</taxon>
        <taxon>Myomorpha</taxon>
        <taxon>Muroidea</taxon>
        <taxon>Muridae</taxon>
        <taxon>Murinae</taxon>
        <taxon>Mus</taxon>
        <taxon>Mus</taxon>
    </lineage>
</organism>